<accession>P0DJY7</accession>
<accession>P08095</accession>
<accession>P62560</accession>
<feature type="signal peptide" evidence="1">
    <location>
        <begin position="1"/>
        <end position="30"/>
    </location>
</feature>
<feature type="chain" id="PRO_0000035596" description="Exotoxin type A">
    <location>
        <begin position="31"/>
        <end position="250"/>
    </location>
</feature>
<feature type="disulfide bond">
    <location>
        <begin position="117"/>
        <end position="128"/>
    </location>
</feature>
<feature type="helix" evidence="4">
    <location>
        <begin position="36"/>
        <end position="38"/>
    </location>
</feature>
<feature type="helix" evidence="4">
    <location>
        <begin position="42"/>
        <end position="44"/>
    </location>
</feature>
<feature type="turn" evidence="4">
    <location>
        <begin position="46"/>
        <end position="48"/>
    </location>
</feature>
<feature type="helix" evidence="4">
    <location>
        <begin position="49"/>
        <end position="56"/>
    </location>
</feature>
<feature type="strand" evidence="4">
    <location>
        <begin position="60"/>
        <end position="65"/>
    </location>
</feature>
<feature type="strand" evidence="4">
    <location>
        <begin position="75"/>
        <end position="78"/>
    </location>
</feature>
<feature type="strand" evidence="4">
    <location>
        <begin position="85"/>
        <end position="91"/>
    </location>
</feature>
<feature type="helix" evidence="4">
    <location>
        <begin position="95"/>
        <end position="101"/>
    </location>
</feature>
<feature type="strand" evidence="3">
    <location>
        <begin position="102"/>
        <end position="104"/>
    </location>
</feature>
<feature type="strand" evidence="4">
    <location>
        <begin position="106"/>
        <end position="110"/>
    </location>
</feature>
<feature type="strand" evidence="4">
    <location>
        <begin position="120"/>
        <end position="122"/>
    </location>
</feature>
<feature type="strand" evidence="4">
    <location>
        <begin position="126"/>
        <end position="130"/>
    </location>
</feature>
<feature type="strand" evidence="4">
    <location>
        <begin position="133"/>
        <end position="135"/>
    </location>
</feature>
<feature type="strand" evidence="4">
    <location>
        <begin position="140"/>
        <end position="153"/>
    </location>
</feature>
<feature type="strand" evidence="4">
    <location>
        <begin position="156"/>
        <end position="170"/>
    </location>
</feature>
<feature type="helix" evidence="4">
    <location>
        <begin position="171"/>
        <end position="186"/>
    </location>
</feature>
<feature type="strand" evidence="4">
    <location>
        <begin position="197"/>
        <end position="205"/>
    </location>
</feature>
<feature type="strand" evidence="5">
    <location>
        <begin position="206"/>
        <end position="208"/>
    </location>
</feature>
<feature type="strand" evidence="4">
    <location>
        <begin position="211"/>
        <end position="216"/>
    </location>
</feature>
<feature type="helix" evidence="4">
    <location>
        <begin position="223"/>
        <end position="226"/>
    </location>
</feature>
<feature type="helix" evidence="4">
    <location>
        <begin position="227"/>
        <end position="230"/>
    </location>
</feature>
<feature type="strand" evidence="4">
    <location>
        <begin position="235"/>
        <end position="237"/>
    </location>
</feature>
<feature type="strand" evidence="4">
    <location>
        <begin position="240"/>
        <end position="248"/>
    </location>
</feature>
<proteinExistence type="evidence at protein level"/>
<sequence>MENNKEVLKKMVFFVLMKFLGLTILPKGICSTRPKPSQLQRSNLVKTFKIYIFFMRVTLVTHENVKSVDQLLSHDLIYNVSGPNYDKLKTELKNQEMATLFKDKNVDIYGVEYYHLCYLCENAERSACLYGGVTNHEGNHLEIPKKIVVKVSIDGIQSLSFDIEQIKNGNCSRISYTVRKYLTDNKQLYTNGPSKYETGYIKFIPKNKESFWFDFFPEPEFTQSKYLMIYKDNETLDSNTSQIEVYLTTK</sequence>
<comment type="function">
    <text>Causative agent of the symptoms associated with scarlet fever, have been associated with streptococcal toxic shock-like disease and may play a role in the early events of rheumatic fever.</text>
</comment>
<comment type="miscellaneous">
    <text>Binds to major histocompatibility complex class II beta chain.</text>
</comment>
<comment type="miscellaneous">
    <text>This toxin is coded by bacteriophage T12.</text>
</comment>
<comment type="similarity">
    <text evidence="2">Belongs to the staphylococcal/streptococcal toxin family.</text>
</comment>
<dbReference type="EMBL" id="X03929">
    <property type="protein sequence ID" value="CAA27568.1"/>
    <property type="molecule type" value="Genomic_DNA"/>
</dbReference>
<dbReference type="PIR" id="A26152">
    <property type="entry name" value="A26152"/>
</dbReference>
<dbReference type="PDB" id="1B1Z">
    <property type="method" value="X-ray"/>
    <property type="resolution" value="2.57 A"/>
    <property type="chains" value="A/B/C/D=60-250"/>
</dbReference>
<dbReference type="PDB" id="1FNU">
    <property type="method" value="X-ray"/>
    <property type="resolution" value="1.94 A"/>
    <property type="chains" value="A/B/C/D=60-250"/>
</dbReference>
<dbReference type="PDB" id="1FNV">
    <property type="method" value="X-ray"/>
    <property type="resolution" value="3.60 A"/>
    <property type="chains" value="A/B/C/D=60-250"/>
</dbReference>
<dbReference type="PDB" id="1FNW">
    <property type="method" value="X-ray"/>
    <property type="resolution" value="3.90 A"/>
    <property type="chains" value="A/B/C/D/E/F/G/H=60-250"/>
</dbReference>
<dbReference type="PDB" id="1HA5">
    <property type="method" value="X-ray"/>
    <property type="resolution" value="2.82 A"/>
    <property type="chains" value="A/B/C/D=60-249"/>
</dbReference>
<dbReference type="PDB" id="1L0X">
    <property type="method" value="X-ray"/>
    <property type="resolution" value="2.80 A"/>
    <property type="chains" value="B/D=60-250"/>
</dbReference>
<dbReference type="PDB" id="1L0Y">
    <property type="method" value="X-ray"/>
    <property type="resolution" value="2.50 A"/>
    <property type="chains" value="B/D=60-250"/>
</dbReference>
<dbReference type="PDB" id="1UUP">
    <property type="method" value="X-ray"/>
    <property type="resolution" value="2.60 A"/>
    <property type="chains" value="A/B/C/D=60-250"/>
</dbReference>
<dbReference type="PDBsum" id="1B1Z"/>
<dbReference type="PDBsum" id="1FNU"/>
<dbReference type="PDBsum" id="1FNV"/>
<dbReference type="PDBsum" id="1FNW"/>
<dbReference type="PDBsum" id="1HA5"/>
<dbReference type="PDBsum" id="1L0X"/>
<dbReference type="PDBsum" id="1L0Y"/>
<dbReference type="PDBsum" id="1UUP"/>
<dbReference type="SMR" id="P0DJY7"/>
<dbReference type="EvolutionaryTrace" id="P0DJY7"/>
<dbReference type="GO" id="GO:0005576">
    <property type="term" value="C:extracellular region"/>
    <property type="evidence" value="ECO:0007669"/>
    <property type="project" value="InterPro"/>
</dbReference>
<dbReference type="GO" id="GO:0090729">
    <property type="term" value="F:toxin activity"/>
    <property type="evidence" value="ECO:0007669"/>
    <property type="project" value="UniProtKB-KW"/>
</dbReference>
<dbReference type="Gene3D" id="2.40.50.110">
    <property type="match status" value="1"/>
</dbReference>
<dbReference type="Gene3D" id="3.10.20.120">
    <property type="match status" value="1"/>
</dbReference>
<dbReference type="InterPro" id="IPR008992">
    <property type="entry name" value="Enterotoxin"/>
</dbReference>
<dbReference type="InterPro" id="IPR006126">
    <property type="entry name" value="Staph/Strept_toxin_CS"/>
</dbReference>
<dbReference type="InterPro" id="IPR006173">
    <property type="entry name" value="Staph_tox_OB"/>
</dbReference>
<dbReference type="InterPro" id="IPR016091">
    <property type="entry name" value="SuperAg_toxin_C"/>
</dbReference>
<dbReference type="InterPro" id="IPR013307">
    <property type="entry name" value="Superantigen_bac"/>
</dbReference>
<dbReference type="InterPro" id="IPR006123">
    <property type="entry name" value="Toxin_b-grasp_Staph/Strep"/>
</dbReference>
<dbReference type="Pfam" id="PF02876">
    <property type="entry name" value="Stap_Strp_tox_C"/>
    <property type="match status" value="1"/>
</dbReference>
<dbReference type="Pfam" id="PF01123">
    <property type="entry name" value="Stap_Strp_toxin"/>
    <property type="match status" value="1"/>
</dbReference>
<dbReference type="PRINTS" id="PR01898">
    <property type="entry name" value="SAGSUPRFAMLY"/>
</dbReference>
<dbReference type="SUPFAM" id="SSF50203">
    <property type="entry name" value="Bacterial enterotoxins"/>
    <property type="match status" value="1"/>
</dbReference>
<dbReference type="SUPFAM" id="SSF54334">
    <property type="entry name" value="Superantigen toxins, C-terminal domain"/>
    <property type="match status" value="1"/>
</dbReference>
<dbReference type="PROSITE" id="PS00277">
    <property type="entry name" value="STAPH_STREP_TOXIN_1"/>
    <property type="match status" value="1"/>
</dbReference>
<dbReference type="PROSITE" id="PS00278">
    <property type="entry name" value="STAPH_STREP_TOXIN_2"/>
    <property type="match status" value="1"/>
</dbReference>
<organism>
    <name type="scientific">Streptococcus pyogenes</name>
    <dbReference type="NCBI Taxonomy" id="1314"/>
    <lineage>
        <taxon>Bacteria</taxon>
        <taxon>Bacillati</taxon>
        <taxon>Bacillota</taxon>
        <taxon>Bacilli</taxon>
        <taxon>Lactobacillales</taxon>
        <taxon>Streptococcaceae</taxon>
        <taxon>Streptococcus</taxon>
    </lineage>
</organism>
<protein>
    <recommendedName>
        <fullName>Exotoxin type A</fullName>
    </recommendedName>
    <alternativeName>
        <fullName>Erythrogenic toxin</fullName>
    </alternativeName>
    <alternativeName>
        <fullName>SPE A</fullName>
    </alternativeName>
    <alternativeName>
        <fullName>Scarlet fever toxin</fullName>
    </alternativeName>
</protein>
<gene>
    <name type="primary">speA</name>
</gene>
<name>SPEA_STRPY</name>
<reference key="1">
    <citation type="journal article" date="1986" name="Mol. Gen. Genet.">
        <title>Streptococcal pyrogenic exotoxin type A (scarlet fever toxin) is related to Staphylococcus aureus enterotoxin B.</title>
        <authorList>
            <person name="Johnson L.P."/>
            <person name="L'Italien J.J."/>
            <person name="Schlievert P.M."/>
        </authorList>
    </citation>
    <scope>NUCLEOTIDE SEQUENCE [GENOMIC DNA]</scope>
</reference>
<reference key="2">
    <citation type="journal article" date="1999" name="EMBO J.">
        <title>Structural basis for the recognition of superantigen streptococcal pyrogenic exotoxin A (SpeA1) by MHC class II molecules and T-cell receptors.</title>
        <authorList>
            <person name="Papageorgiou A.C."/>
            <person name="Collins C.M."/>
            <person name="Gutman D.M."/>
            <person name="Kline J.B."/>
            <person name="O'Brien S.M."/>
            <person name="Tranter H.S."/>
            <person name="Acharya K.R."/>
        </authorList>
    </citation>
    <scope>X-RAY CRYSTALLOGRAPHY (2.57 ANGSTROMS) OF 33-250</scope>
</reference>
<keyword id="KW-0002">3D-structure</keyword>
<keyword id="KW-1015">Disulfide bond</keyword>
<keyword id="KW-0732">Signal</keyword>
<keyword id="KW-0800">Toxin</keyword>
<keyword id="KW-0843">Virulence</keyword>
<evidence type="ECO:0000255" key="1"/>
<evidence type="ECO:0000305" key="2"/>
<evidence type="ECO:0007829" key="3">
    <source>
        <dbReference type="PDB" id="1L0X"/>
    </source>
</evidence>
<evidence type="ECO:0007829" key="4">
    <source>
        <dbReference type="PDB" id="1L0Y"/>
    </source>
</evidence>
<evidence type="ECO:0007829" key="5">
    <source>
        <dbReference type="PDB" id="1UUP"/>
    </source>
</evidence>